<sequence>MWKTWLQGGARVIFDDYKPYLRLDPQNGDLLLNEQLDREALCDLTEPCILHFQVLFENPLQFFRAELLVKDINDHTPTFLNNHMLLKISEGATLGTLFQIDSAQDLDVGKNGVQNYTISPNPHFHLKLRDSDEGRKYPELVLDQSLDREKVSEFSLTLTAVDGGSPPRSGTTLINVVVLDISDNAPEFEKPVYEVLVPESSPLDSLIIKASATDLDAGINGELSYSFSHVSRDVRKTFEIHPISGEVYLKAPLDFEIIQSYIINIQAIEGGSLSGKSSILVRVVDVNDNPPEIAMTSLTSPIPENSSPEMVVAVFSIRDQDAGDNGRTVCSIQDNLPFVLKPTFKNFYALVTEHPLDREVRNEYNITITVTDLGTPRLKTEHNITVLVSDVNDNAPIFTQTSYTLFVRENNSPALHIGSVSATDRDSGTNAQVTYSLLPPQDPHLPLTSLVSINADNGHLFALRSLDYEALQEFGFRVGAADHGSPALSSEVLVRVLVLDANDNSPFVLYPLQNGSAPCTELVPRAAEPGYLVTKVVAVDGDSGQNAWLSYQLLKATEPGLFGVWAHNGEGRTARLLSERDAAKHRLVVLVKDNGEPPRSATATLHVLLVEGFSQPYLPLTEAAPSQAQADSLTVYLVVALASVSSLFLFSVFLFVAVRLCRRSRAASMGRCSVPECPFPGHLVDVSGTGTLSQSYQYEVCLTGGSGANEFKFLKPVIPNLLSRDSEMEKAPPF</sequence>
<reference key="1">
    <citation type="journal article" date="2001" name="FEBS Lett.">
        <title>The human and murine protocadherin-beta one-exon gene families show high evolutionary conservation, despite the difference in gene number.</title>
        <authorList>
            <person name="Vanhalst K."/>
            <person name="Kools P."/>
            <person name="Vanden Eynde E."/>
            <person name="van Roy F."/>
        </authorList>
    </citation>
    <scope>NUCLEOTIDE SEQUENCE [MRNA]</scope>
</reference>
<reference key="2">
    <citation type="journal article" date="2004" name="Nat. Genet.">
        <title>Complete sequencing and characterization of 21,243 full-length human cDNAs.</title>
        <authorList>
            <person name="Ota T."/>
            <person name="Suzuki Y."/>
            <person name="Nishikawa T."/>
            <person name="Otsuki T."/>
            <person name="Sugiyama T."/>
            <person name="Irie R."/>
            <person name="Wakamatsu A."/>
            <person name="Hayashi K."/>
            <person name="Sato H."/>
            <person name="Nagai K."/>
            <person name="Kimura K."/>
            <person name="Makita H."/>
            <person name="Sekine M."/>
            <person name="Obayashi M."/>
            <person name="Nishi T."/>
            <person name="Shibahara T."/>
            <person name="Tanaka T."/>
            <person name="Ishii S."/>
            <person name="Yamamoto J."/>
            <person name="Saito K."/>
            <person name="Kawai Y."/>
            <person name="Isono Y."/>
            <person name="Nakamura Y."/>
            <person name="Nagahari K."/>
            <person name="Murakami K."/>
            <person name="Yasuda T."/>
            <person name="Iwayanagi T."/>
            <person name="Wagatsuma M."/>
            <person name="Shiratori A."/>
            <person name="Sudo H."/>
            <person name="Hosoiri T."/>
            <person name="Kaku Y."/>
            <person name="Kodaira H."/>
            <person name="Kondo H."/>
            <person name="Sugawara M."/>
            <person name="Takahashi M."/>
            <person name="Kanda K."/>
            <person name="Yokoi T."/>
            <person name="Furuya T."/>
            <person name="Kikkawa E."/>
            <person name="Omura Y."/>
            <person name="Abe K."/>
            <person name="Kamihara K."/>
            <person name="Katsuta N."/>
            <person name="Sato K."/>
            <person name="Tanikawa M."/>
            <person name="Yamazaki M."/>
            <person name="Ninomiya K."/>
            <person name="Ishibashi T."/>
            <person name="Yamashita H."/>
            <person name="Murakawa K."/>
            <person name="Fujimori K."/>
            <person name="Tanai H."/>
            <person name="Kimata M."/>
            <person name="Watanabe M."/>
            <person name="Hiraoka S."/>
            <person name="Chiba Y."/>
            <person name="Ishida S."/>
            <person name="Ono Y."/>
            <person name="Takiguchi S."/>
            <person name="Watanabe S."/>
            <person name="Yosida M."/>
            <person name="Hotuta T."/>
            <person name="Kusano J."/>
            <person name="Kanehori K."/>
            <person name="Takahashi-Fujii A."/>
            <person name="Hara H."/>
            <person name="Tanase T.-O."/>
            <person name="Nomura Y."/>
            <person name="Togiya S."/>
            <person name="Komai F."/>
            <person name="Hara R."/>
            <person name="Takeuchi K."/>
            <person name="Arita M."/>
            <person name="Imose N."/>
            <person name="Musashino K."/>
            <person name="Yuuki H."/>
            <person name="Oshima A."/>
            <person name="Sasaki N."/>
            <person name="Aotsuka S."/>
            <person name="Yoshikawa Y."/>
            <person name="Matsunawa H."/>
            <person name="Ichihara T."/>
            <person name="Shiohata N."/>
            <person name="Sano S."/>
            <person name="Moriya S."/>
            <person name="Momiyama H."/>
            <person name="Satoh N."/>
            <person name="Takami S."/>
            <person name="Terashima Y."/>
            <person name="Suzuki O."/>
            <person name="Nakagawa S."/>
            <person name="Senoh A."/>
            <person name="Mizoguchi H."/>
            <person name="Goto Y."/>
            <person name="Shimizu F."/>
            <person name="Wakebe H."/>
            <person name="Hishigaki H."/>
            <person name="Watanabe T."/>
            <person name="Sugiyama A."/>
            <person name="Takemoto M."/>
            <person name="Kawakami B."/>
            <person name="Yamazaki M."/>
            <person name="Watanabe K."/>
            <person name="Kumagai A."/>
            <person name="Itakura S."/>
            <person name="Fukuzumi Y."/>
            <person name="Fujimori Y."/>
            <person name="Komiyama M."/>
            <person name="Tashiro H."/>
            <person name="Tanigami A."/>
            <person name="Fujiwara T."/>
            <person name="Ono T."/>
            <person name="Yamada K."/>
            <person name="Fujii Y."/>
            <person name="Ozaki K."/>
            <person name="Hirao M."/>
            <person name="Ohmori Y."/>
            <person name="Kawabata A."/>
            <person name="Hikiji T."/>
            <person name="Kobatake N."/>
            <person name="Inagaki H."/>
            <person name="Ikema Y."/>
            <person name="Okamoto S."/>
            <person name="Okitani R."/>
            <person name="Kawakami T."/>
            <person name="Noguchi S."/>
            <person name="Itoh T."/>
            <person name="Shigeta K."/>
            <person name="Senba T."/>
            <person name="Matsumura K."/>
            <person name="Nakajima Y."/>
            <person name="Mizuno T."/>
            <person name="Morinaga M."/>
            <person name="Sasaki M."/>
            <person name="Togashi T."/>
            <person name="Oyama M."/>
            <person name="Hata H."/>
            <person name="Watanabe M."/>
            <person name="Komatsu T."/>
            <person name="Mizushima-Sugano J."/>
            <person name="Satoh T."/>
            <person name="Shirai Y."/>
            <person name="Takahashi Y."/>
            <person name="Nakagawa K."/>
            <person name="Okumura K."/>
            <person name="Nagase T."/>
            <person name="Nomura N."/>
            <person name="Kikuchi H."/>
            <person name="Masuho Y."/>
            <person name="Yamashita R."/>
            <person name="Nakai K."/>
            <person name="Yada T."/>
            <person name="Nakamura Y."/>
            <person name="Ohara O."/>
            <person name="Isogai T."/>
            <person name="Sugano S."/>
        </authorList>
    </citation>
    <scope>NUCLEOTIDE SEQUENCE [LARGE SCALE MRNA]</scope>
    <source>
        <tissue>Fetal brain</tissue>
    </source>
</reference>
<reference key="3">
    <citation type="journal article" date="2004" name="Nature">
        <title>The DNA sequence and comparative analysis of human chromosome 5.</title>
        <authorList>
            <person name="Schmutz J."/>
            <person name="Martin J."/>
            <person name="Terry A."/>
            <person name="Couronne O."/>
            <person name="Grimwood J."/>
            <person name="Lowry S."/>
            <person name="Gordon L.A."/>
            <person name="Scott D."/>
            <person name="Xie G."/>
            <person name="Huang W."/>
            <person name="Hellsten U."/>
            <person name="Tran-Gyamfi M."/>
            <person name="She X."/>
            <person name="Prabhakar S."/>
            <person name="Aerts A."/>
            <person name="Altherr M."/>
            <person name="Bajorek E."/>
            <person name="Black S."/>
            <person name="Branscomb E."/>
            <person name="Caoile C."/>
            <person name="Challacombe J.F."/>
            <person name="Chan Y.M."/>
            <person name="Denys M."/>
            <person name="Detter J.C."/>
            <person name="Escobar J."/>
            <person name="Flowers D."/>
            <person name="Fotopulos D."/>
            <person name="Glavina T."/>
            <person name="Gomez M."/>
            <person name="Gonzales E."/>
            <person name="Goodstein D."/>
            <person name="Grigoriev I."/>
            <person name="Groza M."/>
            <person name="Hammon N."/>
            <person name="Hawkins T."/>
            <person name="Haydu L."/>
            <person name="Israni S."/>
            <person name="Jett J."/>
            <person name="Kadner K."/>
            <person name="Kimball H."/>
            <person name="Kobayashi A."/>
            <person name="Lopez F."/>
            <person name="Lou Y."/>
            <person name="Martinez D."/>
            <person name="Medina C."/>
            <person name="Morgan J."/>
            <person name="Nandkeshwar R."/>
            <person name="Noonan J.P."/>
            <person name="Pitluck S."/>
            <person name="Pollard M."/>
            <person name="Predki P."/>
            <person name="Priest J."/>
            <person name="Ramirez L."/>
            <person name="Retterer J."/>
            <person name="Rodriguez A."/>
            <person name="Rogers S."/>
            <person name="Salamov A."/>
            <person name="Salazar A."/>
            <person name="Thayer N."/>
            <person name="Tice H."/>
            <person name="Tsai M."/>
            <person name="Ustaszewska A."/>
            <person name="Vo N."/>
            <person name="Wheeler J."/>
            <person name="Wu K."/>
            <person name="Yang J."/>
            <person name="Dickson M."/>
            <person name="Cheng J.-F."/>
            <person name="Eichler E.E."/>
            <person name="Olsen A."/>
            <person name="Pennacchio L.A."/>
            <person name="Rokhsar D.S."/>
            <person name="Richardson P."/>
            <person name="Lucas S.M."/>
            <person name="Myers R.M."/>
            <person name="Rubin E.M."/>
        </authorList>
    </citation>
    <scope>NUCLEOTIDE SEQUENCE [LARGE SCALE GENOMIC DNA]</scope>
</reference>
<reference key="4">
    <citation type="journal article" date="1999" name="Cell">
        <title>A striking organization of a large family of human neural cadherin-like cell adhesion genes.</title>
        <authorList>
            <person name="Wu Q."/>
            <person name="Maniatis T."/>
        </authorList>
    </citation>
    <scope>IDENTIFICATION</scope>
</reference>
<reference key="5">
    <citation type="journal article" date="2001" name="Genome Res.">
        <title>Comparative DNA sequence analysis of mouse and human protocadherin gene clusters.</title>
        <authorList>
            <person name="Wu Q."/>
            <person name="Zhang T."/>
            <person name="Cheng J.-F."/>
            <person name="Kim Y."/>
            <person name="Grimwood J."/>
            <person name="Schmutz J."/>
            <person name="Dickson M."/>
            <person name="Noonan J.P."/>
            <person name="Zhang M.Q."/>
            <person name="Myers R.M."/>
            <person name="Maniatis T."/>
        </authorList>
    </citation>
    <scope>IDENTIFICATION</scope>
</reference>
<evidence type="ECO:0000250" key="1"/>
<evidence type="ECO:0000255" key="2"/>
<evidence type="ECO:0000255" key="3">
    <source>
        <dbReference type="PROSITE-ProRule" id="PRU00043"/>
    </source>
</evidence>
<evidence type="ECO:0000305" key="4"/>
<protein>
    <recommendedName>
        <fullName>Putative protocadherin beta-18</fullName>
        <shortName>PCDH-beta-18</shortName>
    </recommendedName>
    <alternativeName>
        <fullName>PCDH-psi2</fullName>
    </alternativeName>
</protein>
<feature type="chain" id="PRO_0000339362" description="Putative protocadherin beta-18">
    <location>
        <begin position="1"/>
        <end position="734"/>
    </location>
</feature>
<feature type="transmembrane region" description="Helical" evidence="2">
    <location>
        <begin position="638"/>
        <end position="658"/>
    </location>
</feature>
<feature type="domain" description="Cadherin 1" evidence="3">
    <location>
        <begin position="1"/>
        <end position="79"/>
    </location>
</feature>
<feature type="domain" description="Cadherin 2" evidence="3">
    <location>
        <begin position="80"/>
        <end position="188"/>
    </location>
</feature>
<feature type="domain" description="Cadherin 3" evidence="3">
    <location>
        <begin position="189"/>
        <end position="293"/>
    </location>
</feature>
<feature type="domain" description="Cadherin 4" evidence="3">
    <location>
        <begin position="294"/>
        <end position="398"/>
    </location>
</feature>
<feature type="domain" description="Cadherin 5" evidence="3">
    <location>
        <begin position="399"/>
        <end position="508"/>
    </location>
</feature>
<feature type="domain" description="Cadherin 6" evidence="3">
    <location>
        <begin position="515"/>
        <end position="621"/>
    </location>
</feature>
<feature type="glycosylation site" description="N-linked (GlcNAc...) asparagine" evidence="2">
    <location>
        <position position="115"/>
    </location>
</feature>
<feature type="glycosylation site" description="N-linked (GlcNAc...) asparagine" evidence="2">
    <location>
        <position position="365"/>
    </location>
</feature>
<feature type="glycosylation site" description="N-linked (GlcNAc...) asparagine" evidence="2">
    <location>
        <position position="383"/>
    </location>
</feature>
<feature type="glycosylation site" description="N-linked (GlcNAc...) asparagine" evidence="2">
    <location>
        <position position="514"/>
    </location>
</feature>
<feature type="sequence conflict" description="In Ref. 1; AAK51611 and 2; BAG53070." evidence="4" ref="1 2">
    <original>L</original>
    <variation>H</variation>
    <location>
        <position position="196"/>
    </location>
</feature>
<name>PCDBI_HUMAN</name>
<proteinExistence type="uncertain"/>
<organism>
    <name type="scientific">Homo sapiens</name>
    <name type="common">Human</name>
    <dbReference type="NCBI Taxonomy" id="9606"/>
    <lineage>
        <taxon>Eukaryota</taxon>
        <taxon>Metazoa</taxon>
        <taxon>Chordata</taxon>
        <taxon>Craniata</taxon>
        <taxon>Vertebrata</taxon>
        <taxon>Euteleostomi</taxon>
        <taxon>Mammalia</taxon>
        <taxon>Eutheria</taxon>
        <taxon>Euarchontoglires</taxon>
        <taxon>Primates</taxon>
        <taxon>Haplorrhini</taxon>
        <taxon>Catarrhini</taxon>
        <taxon>Hominidae</taxon>
        <taxon>Homo</taxon>
    </lineage>
</organism>
<comment type="function">
    <text evidence="1">Potential calcium-dependent cell-adhesion protein.</text>
</comment>
<comment type="subcellular location">
    <subcellularLocation>
        <location evidence="4">Cell membrane</location>
        <topology evidence="4">Single-pass membrane protein</topology>
    </subcellularLocation>
</comment>
<comment type="caution">
    <text evidence="4">Could be the product of a pseudogene. In contrast to other members of the family, lacks a signal sequence due to a frameshift, suggesting that it is not functional (PubMed:10380929, PubMed:11230163, PubMed:11322959).</text>
</comment>
<keyword id="KW-0106">Calcium</keyword>
<keyword id="KW-0130">Cell adhesion</keyword>
<keyword id="KW-1003">Cell membrane</keyword>
<keyword id="KW-0325">Glycoprotein</keyword>
<keyword id="KW-0472">Membrane</keyword>
<keyword id="KW-1185">Reference proteome</keyword>
<keyword id="KW-0677">Repeat</keyword>
<keyword id="KW-0812">Transmembrane</keyword>
<keyword id="KW-1133">Transmembrane helix</keyword>
<gene>
    <name type="primary">PCDHB18P</name>
    <name type="synonym">PCDHB18</name>
</gene>
<accession>Q96TA0</accession>
<accession>B3KTF8</accession>
<dbReference type="EMBL" id="AF217743">
    <property type="protein sequence ID" value="AAK51611.1"/>
    <property type="molecule type" value="mRNA"/>
</dbReference>
<dbReference type="EMBL" id="AK095496">
    <property type="protein sequence ID" value="BAG53070.1"/>
    <property type="molecule type" value="mRNA"/>
</dbReference>
<dbReference type="EMBL" id="AC244517">
    <property type="status" value="NOT_ANNOTATED_CDS"/>
    <property type="molecule type" value="Genomic_DNA"/>
</dbReference>
<dbReference type="SMR" id="Q96TA0"/>
<dbReference type="IntAct" id="Q96TA0">
    <property type="interactions" value="1"/>
</dbReference>
<dbReference type="GlyCosmos" id="Q96TA0">
    <property type="glycosylation" value="4 sites, No reported glycans"/>
</dbReference>
<dbReference type="GlyGen" id="Q96TA0">
    <property type="glycosylation" value="4 sites"/>
</dbReference>
<dbReference type="iPTMnet" id="Q96TA0"/>
<dbReference type="PhosphoSitePlus" id="Q96TA0"/>
<dbReference type="BioMuta" id="HGNC:14548"/>
<dbReference type="DMDM" id="74762698"/>
<dbReference type="jPOST" id="Q96TA0"/>
<dbReference type="MassIVE" id="Q96TA0"/>
<dbReference type="PeptideAtlas" id="Q96TA0"/>
<dbReference type="ProteomicsDB" id="78219"/>
<dbReference type="AGR" id="HGNC:14548"/>
<dbReference type="GeneCards" id="PCDHB18P"/>
<dbReference type="HGNC" id="HGNC:14548">
    <property type="gene designation" value="PCDHB18P"/>
</dbReference>
<dbReference type="neXtProt" id="NX_Q96TA0"/>
<dbReference type="InParanoid" id="Q96TA0"/>
<dbReference type="PAN-GO" id="Q96TA0">
    <property type="GO annotations" value="2 GO annotations based on evolutionary models"/>
</dbReference>
<dbReference type="Pharos" id="Q96TA0">
    <property type="development level" value="Tdark"/>
</dbReference>
<dbReference type="Proteomes" id="UP000005640">
    <property type="component" value="Unplaced"/>
</dbReference>
<dbReference type="RNAct" id="Q96TA0">
    <property type="molecule type" value="protein"/>
</dbReference>
<dbReference type="GO" id="GO:0005886">
    <property type="term" value="C:plasma membrane"/>
    <property type="evidence" value="ECO:0000318"/>
    <property type="project" value="GO_Central"/>
</dbReference>
<dbReference type="GO" id="GO:0005509">
    <property type="term" value="F:calcium ion binding"/>
    <property type="evidence" value="ECO:0007669"/>
    <property type="project" value="InterPro"/>
</dbReference>
<dbReference type="GO" id="GO:0007155">
    <property type="term" value="P:cell adhesion"/>
    <property type="evidence" value="ECO:0000318"/>
    <property type="project" value="GO_Central"/>
</dbReference>
<dbReference type="GO" id="GO:0007156">
    <property type="term" value="P:homophilic cell adhesion via plasma membrane adhesion molecules"/>
    <property type="evidence" value="ECO:0007669"/>
    <property type="project" value="InterPro"/>
</dbReference>
<dbReference type="GO" id="GO:0007399">
    <property type="term" value="P:nervous system development"/>
    <property type="evidence" value="ECO:0007669"/>
    <property type="project" value="UniProtKB-ARBA"/>
</dbReference>
<dbReference type="CDD" id="cd11304">
    <property type="entry name" value="Cadherin_repeat"/>
    <property type="match status" value="5"/>
</dbReference>
<dbReference type="FunFam" id="2.60.40.60:FF:000001">
    <property type="entry name" value="Protocadherin alpha 2"/>
    <property type="match status" value="1"/>
</dbReference>
<dbReference type="FunFam" id="2.60.40.60:FF:000002">
    <property type="entry name" value="Protocadherin alpha 2"/>
    <property type="match status" value="1"/>
</dbReference>
<dbReference type="FunFam" id="2.60.40.60:FF:000046">
    <property type="entry name" value="Protocadherin beta 5"/>
    <property type="match status" value="1"/>
</dbReference>
<dbReference type="FunFam" id="2.60.40.60:FF:000309">
    <property type="entry name" value="Protocadherin beta-8"/>
    <property type="match status" value="1"/>
</dbReference>
<dbReference type="FunFam" id="2.60.40.60:FF:000018">
    <property type="entry name" value="Protocadherin gamma c3"/>
    <property type="match status" value="1"/>
</dbReference>
<dbReference type="Gene3D" id="2.60.40.60">
    <property type="entry name" value="Cadherins"/>
    <property type="match status" value="6"/>
</dbReference>
<dbReference type="InterPro" id="IPR002126">
    <property type="entry name" value="Cadherin-like_dom"/>
</dbReference>
<dbReference type="InterPro" id="IPR015919">
    <property type="entry name" value="Cadherin-like_sf"/>
</dbReference>
<dbReference type="InterPro" id="IPR032455">
    <property type="entry name" value="Cadherin_C"/>
</dbReference>
<dbReference type="InterPro" id="IPR020894">
    <property type="entry name" value="Cadherin_CS"/>
</dbReference>
<dbReference type="InterPro" id="IPR013164">
    <property type="entry name" value="Cadherin_N"/>
</dbReference>
<dbReference type="InterPro" id="IPR050174">
    <property type="entry name" value="Protocadherin/Cadherin-CA"/>
</dbReference>
<dbReference type="PANTHER" id="PTHR24028">
    <property type="entry name" value="CADHERIN-87A"/>
    <property type="match status" value="1"/>
</dbReference>
<dbReference type="PANTHER" id="PTHR24028:SF98">
    <property type="entry name" value="PROTOCADHERIN BETA-18-RELATED"/>
    <property type="match status" value="1"/>
</dbReference>
<dbReference type="Pfam" id="PF00028">
    <property type="entry name" value="Cadherin"/>
    <property type="match status" value="5"/>
</dbReference>
<dbReference type="Pfam" id="PF08266">
    <property type="entry name" value="Cadherin_2"/>
    <property type="match status" value="1"/>
</dbReference>
<dbReference type="Pfam" id="PF16492">
    <property type="entry name" value="Cadherin_C_2"/>
    <property type="match status" value="1"/>
</dbReference>
<dbReference type="PRINTS" id="PR00205">
    <property type="entry name" value="CADHERIN"/>
</dbReference>
<dbReference type="SMART" id="SM00112">
    <property type="entry name" value="CA"/>
    <property type="match status" value="5"/>
</dbReference>
<dbReference type="SUPFAM" id="SSF49313">
    <property type="entry name" value="Cadherin-like"/>
    <property type="match status" value="5"/>
</dbReference>
<dbReference type="PROSITE" id="PS00232">
    <property type="entry name" value="CADHERIN_1"/>
    <property type="match status" value="4"/>
</dbReference>
<dbReference type="PROSITE" id="PS50268">
    <property type="entry name" value="CADHERIN_2"/>
    <property type="match status" value="6"/>
</dbReference>